<reference key="1">
    <citation type="journal article" date="2003" name="DNA Res.">
        <title>Prediction of the coding sequences of mouse homologues of KIAA gene: III. The complete nucleotide sequences of 500 mouse KIAA-homologous cDNAs identified by screening of terminal sequences of cDNA clones randomly sampled from size-fractionated libraries.</title>
        <authorList>
            <person name="Okazaki N."/>
            <person name="Kikuno R."/>
            <person name="Ohara R."/>
            <person name="Inamoto S."/>
            <person name="Koseki H."/>
            <person name="Hiraoka S."/>
            <person name="Saga Y."/>
            <person name="Nagase T."/>
            <person name="Ohara O."/>
            <person name="Koga H."/>
        </authorList>
    </citation>
    <scope>NUCLEOTIDE SEQUENCE [LARGE SCALE MRNA] (ISOFORM 1)</scope>
    <source>
        <tissue>Brain</tissue>
    </source>
</reference>
<reference key="2">
    <citation type="journal article" date="2009" name="PLoS Biol.">
        <title>Lineage-specific biology revealed by a finished genome assembly of the mouse.</title>
        <authorList>
            <person name="Church D.M."/>
            <person name="Goodstadt L."/>
            <person name="Hillier L.W."/>
            <person name="Zody M.C."/>
            <person name="Goldstein S."/>
            <person name="She X."/>
            <person name="Bult C.J."/>
            <person name="Agarwala R."/>
            <person name="Cherry J.L."/>
            <person name="DiCuccio M."/>
            <person name="Hlavina W."/>
            <person name="Kapustin Y."/>
            <person name="Meric P."/>
            <person name="Maglott D."/>
            <person name="Birtle Z."/>
            <person name="Marques A.C."/>
            <person name="Graves T."/>
            <person name="Zhou S."/>
            <person name="Teague B."/>
            <person name="Potamousis K."/>
            <person name="Churas C."/>
            <person name="Place M."/>
            <person name="Herschleb J."/>
            <person name="Runnheim R."/>
            <person name="Forrest D."/>
            <person name="Amos-Landgraf J."/>
            <person name="Schwartz D.C."/>
            <person name="Cheng Z."/>
            <person name="Lindblad-Toh K."/>
            <person name="Eichler E.E."/>
            <person name="Ponting C.P."/>
        </authorList>
    </citation>
    <scope>NUCLEOTIDE SEQUENCE [LARGE SCALE GENOMIC DNA]</scope>
    <source>
        <strain>C57BL/6J</strain>
    </source>
</reference>
<reference key="3">
    <citation type="journal article" date="2004" name="Genome Res.">
        <title>The status, quality, and expansion of the NIH full-length cDNA project: the Mammalian Gene Collection (MGC).</title>
        <authorList>
            <consortium name="The MGC Project Team"/>
        </authorList>
    </citation>
    <scope>NUCLEOTIDE SEQUENCE [LARGE SCALE MRNA] (ISOFORMS 1 AND 2)</scope>
    <source>
        <strain>C57BL/6J</strain>
        <tissue>Fetal brain</tissue>
        <tissue>Limb</tissue>
    </source>
</reference>
<reference key="4">
    <citation type="journal article" date="2000" name="Genomics">
        <title>Identification of 40 genes on a 1-Mb contig around the IL-4 cytokine family gene cluster on mouse chromosome 11.</title>
        <authorList>
            <person name="Wenderfer S.E."/>
            <person name="Slack J.P."/>
            <person name="McCluskey T.S."/>
            <person name="Monaco J.J."/>
        </authorList>
    </citation>
    <scope>NUCLEOTIDE SEQUENCE [MRNA] OF 11-429 (ISOFORM 1)</scope>
    <source>
        <strain>129/Sv</strain>
    </source>
</reference>
<reference key="5">
    <citation type="submission" date="2009-01" db="UniProtKB">
        <authorList>
            <person name="Lubec G."/>
            <person name="Kang S.U."/>
            <person name="Sunyer B."/>
            <person name="Chen W.-Q."/>
        </authorList>
    </citation>
    <scope>PROTEIN SEQUENCE OF 18-37; 99-113; 179-187; 283-289 AND 296-301</scope>
    <scope>IDENTIFICATION BY MASS SPECTROMETRY</scope>
    <source>
        <strain>C57BL/6J</strain>
        <strain>OF1</strain>
        <tissue>Brain</tissue>
        <tissue>Hippocampus</tissue>
    </source>
</reference>
<reference key="6">
    <citation type="journal article" date="2003" name="Gene">
        <title>Isolation of new splice isoforms, characterization and expression analysis of the human septin SEPT8 (KIAA0202).</title>
        <authorList>
            <person name="Blaeser S."/>
            <person name="Jersch K."/>
            <person name="Hainmann I."/>
            <person name="Zieger W."/>
            <person name="Wunderle D."/>
            <person name="Busse A."/>
            <person name="Zieger B."/>
        </authorList>
    </citation>
    <scope>INTERACTION WITH SEPTIN5</scope>
</reference>
<reference key="7">
    <citation type="journal article" date="2006" name="Mol. Cell. Proteomics">
        <title>Comprehensive identification of phosphorylation sites in postsynaptic density preparations.</title>
        <authorList>
            <person name="Trinidad J.C."/>
            <person name="Specht C.G."/>
            <person name="Thalhammer A."/>
            <person name="Schoepfer R."/>
            <person name="Burlingame A.L."/>
        </authorList>
    </citation>
    <scope>PHOSPHORYLATION [LARGE SCALE ANALYSIS] AT SER-10</scope>
    <scope>IDENTIFICATION BY MASS SPECTROMETRY [LARGE SCALE ANALYSIS]</scope>
    <source>
        <tissue>Brain</tissue>
    </source>
</reference>
<reference key="8">
    <citation type="journal article" date="2007" name="Proc. Natl. Acad. Sci. U.S.A.">
        <title>Large-scale phosphorylation analysis of mouse liver.</title>
        <authorList>
            <person name="Villen J."/>
            <person name="Beausoleil S.A."/>
            <person name="Gerber S.A."/>
            <person name="Gygi S.P."/>
        </authorList>
    </citation>
    <scope>ACETYLATION [LARGE SCALE ANALYSIS] AT ALA-2</scope>
    <scope>PHOSPHORYLATION [LARGE SCALE ANALYSIS] AT SER-10</scope>
    <scope>CLEAVAGE OF INITIATOR METHIONINE [LARGE SCALE ANALYSIS]</scope>
    <scope>IDENTIFICATION BY MASS SPECTROMETRY [LARGE SCALE ANALYSIS]</scope>
    <source>
        <tissue>Liver</tissue>
    </source>
</reference>
<reference key="9">
    <citation type="journal article" date="2009" name="J. Neurochem.">
        <title>Sept8 controls the binding of vesicle-associated membrane protein 2 to synaptophysin.</title>
        <authorList>
            <person name="Ito H."/>
            <person name="Atsuzawa K."/>
            <person name="Morishita R."/>
            <person name="Usuda N."/>
            <person name="Sudo K."/>
            <person name="Iwamoto I."/>
            <person name="Mizutani K."/>
            <person name="Katoh-Semba R."/>
            <person name="Nozawa Y."/>
            <person name="Asano T."/>
            <person name="Nagata K."/>
        </authorList>
    </citation>
    <scope>INTERACTION WITH VAMP2</scope>
</reference>
<reference key="10">
    <citation type="journal article" date="2010" name="Cell">
        <title>A tissue-specific atlas of mouse protein phosphorylation and expression.</title>
        <authorList>
            <person name="Huttlin E.L."/>
            <person name="Jedrychowski M.P."/>
            <person name="Elias J.E."/>
            <person name="Goswami T."/>
            <person name="Rad R."/>
            <person name="Beausoleil S.A."/>
            <person name="Villen J."/>
            <person name="Haas W."/>
            <person name="Sowa M.E."/>
            <person name="Gygi S.P."/>
        </authorList>
    </citation>
    <scope>IDENTIFICATION BY MASS SPECTROMETRY [LARGE SCALE ANALYSIS]</scope>
    <source>
        <tissue>Brain</tissue>
        <tissue>Brown adipose tissue</tissue>
        <tissue>Heart</tissue>
        <tissue>Kidney</tissue>
        <tissue>Lung</tissue>
        <tissue>Pancreas</tissue>
        <tissue>Spleen</tissue>
        <tissue>Testis</tissue>
    </source>
</reference>
<sequence>MAATDLERVSNAEPEPRSLSLGGHVGFDSLPDQLVSKSVTQGFSFNILCVGETGIGKSTLMNTLFNTTFETEEASHHEECVRLRPQTYDLQESNVHLKLTIVDAVGFGDQINKDDSYRPIVDYIDAQFENYLQEELKIRRSLFDYHDTRIHVCLYFITPTGHSLKSLDLVTMKKLDSKVNIIPIIAKADTISKSELHKFKIKIMGELVSNGVQIYQFPTDDEAVAEINAVMNAHLPFAVVGSTEEVKVGNKLVRARQYPWGVVQVENENHCDFVKLREMLIRVNMEDLREQTHSRHYELYRRCKLEEMGFQDSDGDSQPFSLQETYEAKRKEFLSELQRKEEEMRQMFVNKVKETELELKEKERELHEKFEHLKRIHQEEKRKVEEKRRELEEETNAFNCRKAAMEALQSQALHATSQQPLRKDKDKKN</sequence>
<accession>Q8CHH9</accession>
<accession>B1AQY7</accession>
<accession>Q80YC7</accession>
<accession>Q9ESF7</accession>
<proteinExistence type="evidence at protein level"/>
<protein>
    <recommendedName>
        <fullName evidence="11">Septin-8</fullName>
    </recommendedName>
</protein>
<organism>
    <name type="scientific">Mus musculus</name>
    <name type="common">Mouse</name>
    <dbReference type="NCBI Taxonomy" id="10090"/>
    <lineage>
        <taxon>Eukaryota</taxon>
        <taxon>Metazoa</taxon>
        <taxon>Chordata</taxon>
        <taxon>Craniata</taxon>
        <taxon>Vertebrata</taxon>
        <taxon>Euteleostomi</taxon>
        <taxon>Mammalia</taxon>
        <taxon>Eutheria</taxon>
        <taxon>Euarchontoglires</taxon>
        <taxon>Glires</taxon>
        <taxon>Rodentia</taxon>
        <taxon>Myomorpha</taxon>
        <taxon>Muroidea</taxon>
        <taxon>Muridae</taxon>
        <taxon>Murinae</taxon>
        <taxon>Mus</taxon>
        <taxon>Mus</taxon>
    </lineage>
</organism>
<name>SEPT8_MOUSE</name>
<comment type="function">
    <text evidence="2 3">Filament-forming cytoskeletal GTPase (By similarity). May play a role in platelet secretion (By similarity). Seems to participate in the process of SNARE complex formation in synaptic vesicles (By similarity).</text>
</comment>
<comment type="subunit">
    <text evidence="2 3 7 8">Septins polymerize into heterooligomeric protein complexes that form filaments, and can associate with cellular membranes, actin filaments and microtubules. GTPase activity is required for filament formation (By similarity). Interacts with SEPTIN5 (PubMed:12909369). Interacts with CDK14, SEPTIN4 and SEPTIN7 (By similarity). Interacts with VAMP2; the interaction inhibits interaction of VAMP2 with SYP (PubMed:19196426). Interacts with STX1A (By similarity).</text>
</comment>
<comment type="subcellular location">
    <subcellularLocation>
        <location evidence="2">Cytoplasm</location>
    </subcellularLocation>
    <subcellularLocation>
        <location evidence="1">Cytoplasm</location>
        <location evidence="1">Cytoskeleton</location>
    </subcellularLocation>
    <subcellularLocation>
        <location evidence="2">Synapse</location>
    </subcellularLocation>
    <subcellularLocation>
        <location evidence="2">Cell projection</location>
        <location evidence="2">Axon</location>
    </subcellularLocation>
    <subcellularLocation>
        <location evidence="2">Cytoplasmic vesicle</location>
        <location evidence="2">Secretory vesicle</location>
        <location evidence="2">Synaptic vesicle membrane</location>
    </subcellularLocation>
    <subcellularLocation>
        <location evidence="2">Presynapse</location>
    </subcellularLocation>
    <text evidence="2">Expressed in axons of immature neurons, localizes to synapses in mature neurons.</text>
</comment>
<comment type="alternative products">
    <event type="alternative splicing"/>
    <isoform>
        <id>Q8CHH9-1</id>
        <name>1</name>
        <sequence type="displayed"/>
    </isoform>
    <isoform>
        <id>Q8CHH9-2</id>
        <name>2</name>
        <sequence type="described" ref="VSP_009645"/>
    </isoform>
</comment>
<comment type="miscellaneous">
    <molecule>Isoform 2</molecule>
    <text evidence="11">May be due to a competing acceptor splice site.</text>
</comment>
<comment type="similarity">
    <text evidence="5">Belongs to the TRAFAC class TrmE-Era-EngA-EngB-Septin-like GTPase superfamily. Septin GTPase family.</text>
</comment>
<comment type="sequence caution" evidence="11">
    <conflict type="erroneous initiation">
        <sequence resource="EMBL-CDS" id="AAH49819"/>
    </conflict>
    <text>Extended N-terminus.</text>
</comment>
<comment type="sequence caution" evidence="11">
    <conflict type="frameshift">
        <sequence resource="EMBL-CDS" id="BAC41399"/>
    </conflict>
</comment>
<evidence type="ECO:0000250" key="1"/>
<evidence type="ECO:0000250" key="2">
    <source>
        <dbReference type="UniProtKB" id="B0BNF1"/>
    </source>
</evidence>
<evidence type="ECO:0000250" key="3">
    <source>
        <dbReference type="UniProtKB" id="Q92599"/>
    </source>
</evidence>
<evidence type="ECO:0000255" key="4"/>
<evidence type="ECO:0000255" key="5">
    <source>
        <dbReference type="PROSITE-ProRule" id="PRU01056"/>
    </source>
</evidence>
<evidence type="ECO:0000256" key="6">
    <source>
        <dbReference type="SAM" id="MobiDB-lite"/>
    </source>
</evidence>
<evidence type="ECO:0000269" key="7">
    <source>
    </source>
</evidence>
<evidence type="ECO:0000269" key="8">
    <source>
    </source>
</evidence>
<evidence type="ECO:0000303" key="9">
    <source>
    </source>
</evidence>
<evidence type="ECO:0000303" key="10">
    <source>
    </source>
</evidence>
<evidence type="ECO:0000305" key="11"/>
<evidence type="ECO:0000312" key="12">
    <source>
        <dbReference type="MGI" id="MGI:894310"/>
    </source>
</evidence>
<evidence type="ECO:0007744" key="13">
    <source>
    </source>
</evidence>
<evidence type="ECO:0007744" key="14">
    <source>
    </source>
</evidence>
<gene>
    <name evidence="12" type="primary">Septin8</name>
    <name evidence="9" type="synonym">Kiaa0202</name>
    <name evidence="12" type="synonym">Sept8</name>
</gene>
<keyword id="KW-0007">Acetylation</keyword>
<keyword id="KW-0025">Alternative splicing</keyword>
<keyword id="KW-0966">Cell projection</keyword>
<keyword id="KW-0175">Coiled coil</keyword>
<keyword id="KW-0963">Cytoplasm</keyword>
<keyword id="KW-0968">Cytoplasmic vesicle</keyword>
<keyword id="KW-0206">Cytoskeleton</keyword>
<keyword id="KW-0903">Direct protein sequencing</keyword>
<keyword id="KW-0342">GTP-binding</keyword>
<keyword id="KW-0472">Membrane</keyword>
<keyword id="KW-0547">Nucleotide-binding</keyword>
<keyword id="KW-0597">Phosphoprotein</keyword>
<keyword id="KW-1185">Reference proteome</keyword>
<keyword id="KW-0770">Synapse</keyword>
<dbReference type="EMBL" id="AB093215">
    <property type="protein sequence ID" value="BAC41399.1"/>
    <property type="status" value="ALT_SEQ"/>
    <property type="molecule type" value="mRNA"/>
</dbReference>
<dbReference type="EMBL" id="AL596095">
    <property type="status" value="NOT_ANNOTATED_CDS"/>
    <property type="molecule type" value="Genomic_DNA"/>
</dbReference>
<dbReference type="EMBL" id="BC049819">
    <property type="protein sequence ID" value="AAH49819.1"/>
    <property type="status" value="ALT_INIT"/>
    <property type="molecule type" value="mRNA"/>
</dbReference>
<dbReference type="EMBL" id="BC059248">
    <property type="protein sequence ID" value="AAH59248.1"/>
    <property type="molecule type" value="mRNA"/>
</dbReference>
<dbReference type="EMBL" id="AF179996">
    <property type="protein sequence ID" value="AAG09408.1"/>
    <property type="molecule type" value="mRNA"/>
</dbReference>
<dbReference type="CCDS" id="CCDS48794.1">
    <molecule id="Q8CHH9-2"/>
</dbReference>
<dbReference type="CCDS" id="CCDS56768.1">
    <molecule id="Q8CHH9-1"/>
</dbReference>
<dbReference type="RefSeq" id="NP_001239261.1">
    <molecule id="Q8CHH9-1"/>
    <property type="nucleotide sequence ID" value="NM_001252332.2"/>
</dbReference>
<dbReference type="RefSeq" id="NP_001239262.1">
    <property type="nucleotide sequence ID" value="NM_001252333.1"/>
</dbReference>
<dbReference type="RefSeq" id="NP_149156.1">
    <molecule id="Q8CHH9-2"/>
    <property type="nucleotide sequence ID" value="NM_033144.3"/>
</dbReference>
<dbReference type="SMR" id="Q8CHH9"/>
<dbReference type="BioGRID" id="203177">
    <property type="interactions" value="18"/>
</dbReference>
<dbReference type="FunCoup" id="Q8CHH9">
    <property type="interactions" value="878"/>
</dbReference>
<dbReference type="IntAct" id="Q8CHH9">
    <property type="interactions" value="4"/>
</dbReference>
<dbReference type="MINT" id="Q8CHH9"/>
<dbReference type="STRING" id="10090.ENSMUSP00000113038"/>
<dbReference type="GlyGen" id="Q8CHH9">
    <property type="glycosylation" value="1 site, 1 O-linked glycan (1 site)"/>
</dbReference>
<dbReference type="iPTMnet" id="Q8CHH9"/>
<dbReference type="PhosphoSitePlus" id="Q8CHH9"/>
<dbReference type="SwissPalm" id="Q8CHH9"/>
<dbReference type="jPOST" id="Q8CHH9"/>
<dbReference type="PaxDb" id="10090-ENSMUSP00000112920"/>
<dbReference type="ProteomicsDB" id="255388">
    <molecule id="Q8CHH9-1"/>
</dbReference>
<dbReference type="ProteomicsDB" id="255389">
    <molecule id="Q8CHH9-2"/>
</dbReference>
<dbReference type="Pumba" id="Q8CHH9"/>
<dbReference type="Antibodypedia" id="26134">
    <property type="antibodies" value="236 antibodies from 31 providers"/>
</dbReference>
<dbReference type="DNASU" id="20362"/>
<dbReference type="Ensembl" id="ENSMUST00000108987.8">
    <molecule id="Q8CHH9-1"/>
    <property type="protein sequence ID" value="ENSMUSP00000104615.2"/>
    <property type="gene ID" value="ENSMUSG00000018398.19"/>
</dbReference>
<dbReference type="Ensembl" id="ENSMUST00000117061.8">
    <molecule id="Q8CHH9-2"/>
    <property type="protein sequence ID" value="ENSMUSP00000112920.2"/>
    <property type="gene ID" value="ENSMUSG00000018398.19"/>
</dbReference>
<dbReference type="GeneID" id="20362"/>
<dbReference type="KEGG" id="mmu:20362"/>
<dbReference type="UCSC" id="uc007iwh.2">
    <molecule id="Q8CHH9-1"/>
    <property type="organism name" value="mouse"/>
</dbReference>
<dbReference type="UCSC" id="uc007iwj.2">
    <molecule id="Q8CHH9-2"/>
    <property type="organism name" value="mouse"/>
</dbReference>
<dbReference type="AGR" id="MGI:894310"/>
<dbReference type="CTD" id="23176"/>
<dbReference type="MGI" id="MGI:894310">
    <property type="gene designation" value="Septin8"/>
</dbReference>
<dbReference type="VEuPathDB" id="HostDB:ENSMUSG00000018398"/>
<dbReference type="eggNOG" id="KOG3859">
    <property type="taxonomic scope" value="Eukaryota"/>
</dbReference>
<dbReference type="GeneTree" id="ENSGT00940000156068"/>
<dbReference type="HOGENOM" id="CLU_017718_8_1_1"/>
<dbReference type="InParanoid" id="Q8CHH9"/>
<dbReference type="OMA" id="NTWWQAI"/>
<dbReference type="OrthoDB" id="416553at2759"/>
<dbReference type="PhylomeDB" id="Q8CHH9"/>
<dbReference type="TreeFam" id="TF101080"/>
<dbReference type="BioGRID-ORCS" id="20362">
    <property type="hits" value="5 hits in 50 CRISPR screens"/>
</dbReference>
<dbReference type="CD-CODE" id="CE726F99">
    <property type="entry name" value="Postsynaptic density"/>
</dbReference>
<dbReference type="ChiTaRS" id="Sept8">
    <property type="organism name" value="mouse"/>
</dbReference>
<dbReference type="PRO" id="PR:Q8CHH9"/>
<dbReference type="Proteomes" id="UP000000589">
    <property type="component" value="Chromosome 11"/>
</dbReference>
<dbReference type="RNAct" id="Q8CHH9">
    <property type="molecule type" value="protein"/>
</dbReference>
<dbReference type="Bgee" id="ENSMUSG00000018398">
    <property type="expression patterns" value="Expressed in humerus cartilage element and 254 other cell types or tissues"/>
</dbReference>
<dbReference type="ExpressionAtlas" id="Q8CHH9">
    <property type="expression patterns" value="baseline and differential"/>
</dbReference>
<dbReference type="GO" id="GO:0030424">
    <property type="term" value="C:axon"/>
    <property type="evidence" value="ECO:0007669"/>
    <property type="project" value="UniProtKB-SubCell"/>
</dbReference>
<dbReference type="GO" id="GO:0043209">
    <property type="term" value="C:myelin sheath"/>
    <property type="evidence" value="ECO:0007005"/>
    <property type="project" value="UniProtKB"/>
</dbReference>
<dbReference type="GO" id="GO:0098793">
    <property type="term" value="C:presynapse"/>
    <property type="evidence" value="ECO:0000250"/>
    <property type="project" value="UniProtKB"/>
</dbReference>
<dbReference type="GO" id="GO:0031105">
    <property type="term" value="C:septin complex"/>
    <property type="evidence" value="ECO:0000314"/>
    <property type="project" value="UniProtKB"/>
</dbReference>
<dbReference type="GO" id="GO:0030672">
    <property type="term" value="C:synaptic vesicle membrane"/>
    <property type="evidence" value="ECO:0007669"/>
    <property type="project" value="UniProtKB-SubCell"/>
</dbReference>
<dbReference type="GO" id="GO:0005525">
    <property type="term" value="F:GTP binding"/>
    <property type="evidence" value="ECO:0007669"/>
    <property type="project" value="UniProtKB-KW"/>
</dbReference>
<dbReference type="GO" id="GO:0033157">
    <property type="term" value="P:regulation of intracellular protein transport"/>
    <property type="evidence" value="ECO:0000250"/>
    <property type="project" value="UniProtKB"/>
</dbReference>
<dbReference type="GO" id="GO:0031647">
    <property type="term" value="P:regulation of protein stability"/>
    <property type="evidence" value="ECO:0000250"/>
    <property type="project" value="UniProtKB"/>
</dbReference>
<dbReference type="GO" id="GO:0035542">
    <property type="term" value="P:regulation of SNARE complex assembly"/>
    <property type="evidence" value="ECO:0000250"/>
    <property type="project" value="UniProtKB"/>
</dbReference>
<dbReference type="CDD" id="cd01850">
    <property type="entry name" value="CDC_Septin"/>
    <property type="match status" value="1"/>
</dbReference>
<dbReference type="FunFam" id="3.40.50.300:FF:000036">
    <property type="entry name" value="septin-6 isoform X2"/>
    <property type="match status" value="1"/>
</dbReference>
<dbReference type="Gene3D" id="3.40.50.300">
    <property type="entry name" value="P-loop containing nucleotide triphosphate hydrolases"/>
    <property type="match status" value="1"/>
</dbReference>
<dbReference type="InterPro" id="IPR030379">
    <property type="entry name" value="G_SEPTIN_dom"/>
</dbReference>
<dbReference type="InterPro" id="IPR027417">
    <property type="entry name" value="P-loop_NTPase"/>
</dbReference>
<dbReference type="InterPro" id="IPR016491">
    <property type="entry name" value="Septin"/>
</dbReference>
<dbReference type="PANTHER" id="PTHR18884">
    <property type="entry name" value="SEPTIN"/>
    <property type="match status" value="1"/>
</dbReference>
<dbReference type="Pfam" id="PF00735">
    <property type="entry name" value="Septin"/>
    <property type="match status" value="1"/>
</dbReference>
<dbReference type="PIRSF" id="PIRSF006698">
    <property type="entry name" value="Septin"/>
    <property type="match status" value="1"/>
</dbReference>
<dbReference type="SUPFAM" id="SSF52540">
    <property type="entry name" value="P-loop containing nucleoside triphosphate hydrolases"/>
    <property type="match status" value="1"/>
</dbReference>
<dbReference type="PROSITE" id="PS51719">
    <property type="entry name" value="G_SEPTIN"/>
    <property type="match status" value="1"/>
</dbReference>
<feature type="initiator methionine" description="Removed" evidence="14">
    <location>
        <position position="1"/>
    </location>
</feature>
<feature type="chain" id="PRO_0000173534" description="Septin-8">
    <location>
        <begin position="2"/>
        <end position="429"/>
    </location>
</feature>
<feature type="domain" description="Septin-type G" evidence="5">
    <location>
        <begin position="41"/>
        <end position="307"/>
    </location>
</feature>
<feature type="region of interest" description="Disordered" evidence="6">
    <location>
        <begin position="1"/>
        <end position="23"/>
    </location>
</feature>
<feature type="region of interest" description="G1 motif" evidence="5">
    <location>
        <begin position="51"/>
        <end position="58"/>
    </location>
</feature>
<feature type="region of interest" description="G3 motif" evidence="5">
    <location>
        <begin position="103"/>
        <end position="106"/>
    </location>
</feature>
<feature type="region of interest" description="G4 motif" evidence="5">
    <location>
        <begin position="186"/>
        <end position="189"/>
    </location>
</feature>
<feature type="region of interest" description="Disordered" evidence="6">
    <location>
        <begin position="409"/>
        <end position="429"/>
    </location>
</feature>
<feature type="coiled-coil region" evidence="4">
    <location>
        <begin position="320"/>
        <end position="412"/>
    </location>
</feature>
<feature type="compositionally biased region" description="Basic and acidic residues" evidence="6">
    <location>
        <begin position="1"/>
        <end position="16"/>
    </location>
</feature>
<feature type="compositionally biased region" description="Polar residues" evidence="6">
    <location>
        <begin position="409"/>
        <end position="420"/>
    </location>
</feature>
<feature type="binding site" evidence="1">
    <location>
        <begin position="51"/>
        <end position="58"/>
    </location>
    <ligand>
        <name>GTP</name>
        <dbReference type="ChEBI" id="CHEBI:37565"/>
    </ligand>
</feature>
<feature type="binding site" evidence="1">
    <location>
        <position position="106"/>
    </location>
    <ligand>
        <name>GTP</name>
        <dbReference type="ChEBI" id="CHEBI:37565"/>
    </ligand>
</feature>
<feature type="binding site" evidence="1">
    <location>
        <begin position="187"/>
        <end position="195"/>
    </location>
    <ligand>
        <name>GTP</name>
        <dbReference type="ChEBI" id="CHEBI:37565"/>
    </ligand>
</feature>
<feature type="binding site" evidence="1">
    <location>
        <position position="241"/>
    </location>
    <ligand>
        <name>GTP</name>
        <dbReference type="ChEBI" id="CHEBI:37565"/>
    </ligand>
</feature>
<feature type="binding site" evidence="1">
    <location>
        <position position="256"/>
    </location>
    <ligand>
        <name>GTP</name>
        <dbReference type="ChEBI" id="CHEBI:37565"/>
    </ligand>
</feature>
<feature type="modified residue" description="N-acetylalanine" evidence="14">
    <location>
        <position position="2"/>
    </location>
</feature>
<feature type="modified residue" description="Phosphoserine" evidence="13 14">
    <location>
        <position position="10"/>
    </location>
</feature>
<feature type="splice variant" id="VSP_009645" description="In isoform 2." evidence="10">
    <original>N</original>
    <variation>KF</variation>
    <location>
        <position position="429"/>
    </location>
</feature>
<feature type="sequence conflict" description="In Ref. 1; BAC41399." evidence="11" ref="1">
    <original>S</original>
    <variation>A</variation>
    <location>
        <position position="58"/>
    </location>
</feature>